<sequence length="140" mass="15339">MAIHYETKATNVGGRKGHVYTDDRALDIDIVPPAQADGKATNPEQLFAAGYASCFNGAFDLILKQNKVRDAHPEVTLTVRLEDDSDSESPKLSVSIDATIKNVISQEEAEKYLQMAHEFCPYSKATQGNINVDLNVNVVD</sequence>
<proteinExistence type="inferred from homology"/>
<gene>
    <name type="ordered locus">SAUSA300_0786</name>
</gene>
<protein>
    <recommendedName>
        <fullName>Organic hydroperoxide resistance protein-like</fullName>
    </recommendedName>
</protein>
<dbReference type="EMBL" id="CP000255">
    <property type="protein sequence ID" value="ABD22761.1"/>
    <property type="molecule type" value="Genomic_DNA"/>
</dbReference>
<dbReference type="RefSeq" id="WP_000974460.1">
    <property type="nucleotide sequence ID" value="NZ_CP027476.1"/>
</dbReference>
<dbReference type="SMR" id="Q2FIJ2"/>
<dbReference type="KEGG" id="saa:SAUSA300_0786"/>
<dbReference type="HOGENOM" id="CLU_106355_2_1_9"/>
<dbReference type="OMA" id="SACFSNA"/>
<dbReference type="Proteomes" id="UP000001939">
    <property type="component" value="Chromosome"/>
</dbReference>
<dbReference type="GO" id="GO:0006979">
    <property type="term" value="P:response to oxidative stress"/>
    <property type="evidence" value="ECO:0007669"/>
    <property type="project" value="InterPro"/>
</dbReference>
<dbReference type="Gene3D" id="2.20.25.10">
    <property type="match status" value="1"/>
</dbReference>
<dbReference type="Gene3D" id="3.30.300.20">
    <property type="match status" value="1"/>
</dbReference>
<dbReference type="InterPro" id="IPR015946">
    <property type="entry name" value="KH_dom-like_a/b"/>
</dbReference>
<dbReference type="InterPro" id="IPR019953">
    <property type="entry name" value="OHR"/>
</dbReference>
<dbReference type="InterPro" id="IPR003718">
    <property type="entry name" value="OsmC/Ohr_fam"/>
</dbReference>
<dbReference type="InterPro" id="IPR036102">
    <property type="entry name" value="OsmC/Ohrsf"/>
</dbReference>
<dbReference type="NCBIfam" id="TIGR03561">
    <property type="entry name" value="organ_hyd_perox"/>
    <property type="match status" value="1"/>
</dbReference>
<dbReference type="PANTHER" id="PTHR33797">
    <property type="entry name" value="ORGANIC HYDROPEROXIDE RESISTANCE PROTEIN-LIKE"/>
    <property type="match status" value="1"/>
</dbReference>
<dbReference type="PANTHER" id="PTHR33797:SF2">
    <property type="entry name" value="ORGANIC HYDROPEROXIDE RESISTANCE PROTEIN-LIKE"/>
    <property type="match status" value="1"/>
</dbReference>
<dbReference type="Pfam" id="PF02566">
    <property type="entry name" value="OsmC"/>
    <property type="match status" value="1"/>
</dbReference>
<dbReference type="SUPFAM" id="SSF82784">
    <property type="entry name" value="OsmC-like"/>
    <property type="match status" value="1"/>
</dbReference>
<reference key="1">
    <citation type="journal article" date="2006" name="Lancet">
        <title>Complete genome sequence of USA300, an epidemic clone of community-acquired meticillin-resistant Staphylococcus aureus.</title>
        <authorList>
            <person name="Diep B.A."/>
            <person name="Gill S.R."/>
            <person name="Chang R.F."/>
            <person name="Phan T.H."/>
            <person name="Chen J.H."/>
            <person name="Davidson M.G."/>
            <person name="Lin F."/>
            <person name="Lin J."/>
            <person name="Carleton H.A."/>
            <person name="Mongodin E.F."/>
            <person name="Sensabaugh G.F."/>
            <person name="Perdreau-Remington F."/>
        </authorList>
    </citation>
    <scope>NUCLEOTIDE SEQUENCE [LARGE SCALE GENOMIC DNA]</scope>
    <source>
        <strain>USA300</strain>
    </source>
</reference>
<feature type="chain" id="PRO_0000288962" description="Organic hydroperoxide resistance protein-like">
    <location>
        <begin position="1"/>
        <end position="140"/>
    </location>
</feature>
<comment type="similarity">
    <text evidence="1">Belongs to the OsmC/Ohr family.</text>
</comment>
<name>OHRL_STAA3</name>
<accession>Q2FIJ2</accession>
<organism>
    <name type="scientific">Staphylococcus aureus (strain USA300)</name>
    <dbReference type="NCBI Taxonomy" id="367830"/>
    <lineage>
        <taxon>Bacteria</taxon>
        <taxon>Bacillati</taxon>
        <taxon>Bacillota</taxon>
        <taxon>Bacilli</taxon>
        <taxon>Bacillales</taxon>
        <taxon>Staphylococcaceae</taxon>
        <taxon>Staphylococcus</taxon>
    </lineage>
</organism>
<evidence type="ECO:0000305" key="1"/>